<feature type="chain" id="PRO_0000278261" description="Extended synaptotagmin-2-B">
    <location>
        <begin position="1"/>
        <end position="876"/>
    </location>
</feature>
<feature type="topological domain" description="Cytoplasmic" evidence="3">
    <location>
        <begin position="1"/>
        <end position="35"/>
    </location>
</feature>
<feature type="transmembrane region" description="Helical" evidence="3">
    <location>
        <begin position="36"/>
        <end position="56"/>
    </location>
</feature>
<feature type="topological domain" description="Lumenal" evidence="3">
    <location>
        <begin position="57"/>
        <end position="59"/>
    </location>
</feature>
<feature type="transmembrane region" description="Helical" evidence="3">
    <location>
        <begin position="60"/>
        <end position="80"/>
    </location>
</feature>
<feature type="topological domain" description="Cytoplasmic" evidence="3">
    <location>
        <begin position="81"/>
        <end position="876"/>
    </location>
</feature>
<feature type="domain" description="SMP-LTD" evidence="5">
    <location>
        <begin position="123"/>
        <end position="302"/>
    </location>
</feature>
<feature type="domain" description="C2 1" evidence="4">
    <location>
        <begin position="301"/>
        <end position="421"/>
    </location>
</feature>
<feature type="domain" description="C2 2" evidence="4">
    <location>
        <begin position="446"/>
        <end position="592"/>
    </location>
</feature>
<feature type="domain" description="C2 3" evidence="4">
    <location>
        <begin position="741"/>
        <end position="863"/>
    </location>
</feature>
<feature type="region of interest" description="Disordered" evidence="6">
    <location>
        <begin position="1"/>
        <end position="21"/>
    </location>
</feature>
<feature type="region of interest" description="Disordered" evidence="6">
    <location>
        <begin position="614"/>
        <end position="714"/>
    </location>
</feature>
<feature type="region of interest" description="Required for phosphatidylinositol 4,5-bisphosphate-dependent location at the cell membrane" evidence="1">
    <location>
        <begin position="788"/>
        <end position="795"/>
    </location>
</feature>
<feature type="compositionally biased region" description="Pro residues" evidence="6">
    <location>
        <begin position="636"/>
        <end position="656"/>
    </location>
</feature>
<feature type="compositionally biased region" description="Low complexity" evidence="6">
    <location>
        <begin position="686"/>
        <end position="698"/>
    </location>
</feature>
<feature type="binding site" evidence="1">
    <location>
        <position position="332"/>
    </location>
    <ligand>
        <name>Ca(2+)</name>
        <dbReference type="ChEBI" id="CHEBI:29108"/>
        <label>1</label>
    </ligand>
</feature>
<feature type="binding site" evidence="1">
    <location>
        <position position="333"/>
    </location>
    <ligand>
        <name>Ca(2+)</name>
        <dbReference type="ChEBI" id="CHEBI:29108"/>
        <label>1</label>
    </ligand>
</feature>
<feature type="binding site" evidence="1">
    <location>
        <position position="333"/>
    </location>
    <ligand>
        <name>Ca(2+)</name>
        <dbReference type="ChEBI" id="CHEBI:29108"/>
        <label>2</label>
    </ligand>
</feature>
<feature type="binding site" evidence="1">
    <location>
        <position position="345"/>
    </location>
    <ligand>
        <name>Ca(2+)</name>
        <dbReference type="ChEBI" id="CHEBI:29108"/>
        <label>2</label>
    </ligand>
</feature>
<feature type="binding site" evidence="1">
    <location>
        <position position="392"/>
    </location>
    <ligand>
        <name>Ca(2+)</name>
        <dbReference type="ChEBI" id="CHEBI:29108"/>
        <label>1</label>
    </ligand>
</feature>
<feature type="binding site" evidence="1">
    <location>
        <position position="392"/>
    </location>
    <ligand>
        <name>Ca(2+)</name>
        <dbReference type="ChEBI" id="CHEBI:29108"/>
        <label>2</label>
    </ligand>
</feature>
<feature type="binding site" evidence="1">
    <location>
        <position position="393"/>
    </location>
    <ligand>
        <name>Ca(2+)</name>
        <dbReference type="ChEBI" id="CHEBI:29108"/>
        <label>2</label>
    </ligand>
</feature>
<feature type="binding site" evidence="1">
    <location>
        <position position="394"/>
    </location>
    <ligand>
        <name>Ca(2+)</name>
        <dbReference type="ChEBI" id="CHEBI:29108"/>
        <label>1</label>
    </ligand>
</feature>
<feature type="binding site" evidence="1">
    <location>
        <position position="394"/>
    </location>
    <ligand>
        <name>Ca(2+)</name>
        <dbReference type="ChEBI" id="CHEBI:29108"/>
        <label>2</label>
    </ligand>
</feature>
<feature type="binding site" evidence="1">
    <location>
        <position position="394"/>
    </location>
    <ligand>
        <name>Ca(2+)</name>
        <dbReference type="ChEBI" id="CHEBI:29108"/>
        <label>3</label>
    </ligand>
</feature>
<feature type="binding site" evidence="1">
    <location>
        <position position="396"/>
    </location>
    <ligand>
        <name>Ca(2+)</name>
        <dbReference type="ChEBI" id="CHEBI:29108"/>
        <label>3</label>
    </ligand>
</feature>
<feature type="binding site" evidence="1">
    <location>
        <position position="398"/>
    </location>
    <ligand>
        <name>Ca(2+)</name>
        <dbReference type="ChEBI" id="CHEBI:29108"/>
        <label>3</label>
    </ligand>
</feature>
<feature type="binding site" evidence="1">
    <location>
        <position position="399"/>
    </location>
    <ligand>
        <name>Ca(2+)</name>
        <dbReference type="ChEBI" id="CHEBI:29108"/>
        <label>1</label>
    </ligand>
</feature>
<protein>
    <recommendedName>
        <fullName>Extended synaptotagmin-2-B</fullName>
        <shortName>E-Syt2-B</shortName>
    </recommendedName>
</protein>
<gene>
    <name type="primary">esyt2-b</name>
    <name type="synonym">fam62b-b</name>
</gene>
<dbReference type="EMBL" id="BC046701">
    <property type="protein sequence ID" value="AAH46701.1"/>
    <property type="molecule type" value="mRNA"/>
</dbReference>
<dbReference type="SMR" id="Q7ZWU7"/>
<dbReference type="GeneID" id="380278"/>
<dbReference type="KEGG" id="xla:380278"/>
<dbReference type="AGR" id="Xenbase:XB-GENE-5932792"/>
<dbReference type="CTD" id="380278"/>
<dbReference type="Xenbase" id="XB-GENE-5932792">
    <property type="gene designation" value="esyt2.L"/>
</dbReference>
<dbReference type="OrthoDB" id="1029639at2759"/>
<dbReference type="Proteomes" id="UP000186698">
    <property type="component" value="Chromosome 6L"/>
</dbReference>
<dbReference type="Bgee" id="380278">
    <property type="expression patterns" value="Expressed in spleen and 19 other cell types or tissues"/>
</dbReference>
<dbReference type="GO" id="GO:0009898">
    <property type="term" value="C:cytoplasmic side of plasma membrane"/>
    <property type="evidence" value="ECO:0000250"/>
    <property type="project" value="UniProtKB"/>
</dbReference>
<dbReference type="GO" id="GO:0005789">
    <property type="term" value="C:endoplasmic reticulum membrane"/>
    <property type="evidence" value="ECO:0000250"/>
    <property type="project" value="UniProtKB"/>
</dbReference>
<dbReference type="GO" id="GO:0140268">
    <property type="term" value="C:endoplasmic reticulum-plasma membrane contact site"/>
    <property type="evidence" value="ECO:0000250"/>
    <property type="project" value="UniProtKB"/>
</dbReference>
<dbReference type="GO" id="GO:0044232">
    <property type="term" value="C:organelle membrane contact site"/>
    <property type="evidence" value="ECO:0000250"/>
    <property type="project" value="UniProtKB"/>
</dbReference>
<dbReference type="GO" id="GO:0005509">
    <property type="term" value="F:calcium ion binding"/>
    <property type="evidence" value="ECO:0000250"/>
    <property type="project" value="UniProtKB"/>
</dbReference>
<dbReference type="GO" id="GO:0005544">
    <property type="term" value="F:calcium-dependent phospholipid binding"/>
    <property type="evidence" value="ECO:0000318"/>
    <property type="project" value="GO_Central"/>
</dbReference>
<dbReference type="GO" id="GO:0031210">
    <property type="term" value="F:phosphatidylcholine binding"/>
    <property type="evidence" value="ECO:0000250"/>
    <property type="project" value="UniProtKB"/>
</dbReference>
<dbReference type="GO" id="GO:0008429">
    <property type="term" value="F:phosphatidylethanolamine binding"/>
    <property type="evidence" value="ECO:0000250"/>
    <property type="project" value="UniProtKB"/>
</dbReference>
<dbReference type="GO" id="GO:0035091">
    <property type="term" value="F:phosphatidylinositol binding"/>
    <property type="evidence" value="ECO:0000250"/>
    <property type="project" value="UniProtKB"/>
</dbReference>
<dbReference type="GO" id="GO:0006897">
    <property type="term" value="P:endocytosis"/>
    <property type="evidence" value="ECO:0007669"/>
    <property type="project" value="UniProtKB-KW"/>
</dbReference>
<dbReference type="GO" id="GO:0061817">
    <property type="term" value="P:endoplasmic reticulum-plasma membrane tethering"/>
    <property type="evidence" value="ECO:0007669"/>
    <property type="project" value="InterPro"/>
</dbReference>
<dbReference type="GO" id="GO:0006869">
    <property type="term" value="P:lipid transport"/>
    <property type="evidence" value="ECO:0007669"/>
    <property type="project" value="UniProtKB-KW"/>
</dbReference>
<dbReference type="CDD" id="cd08391">
    <property type="entry name" value="C2A_C2C_Synaptotagmin_like"/>
    <property type="match status" value="1"/>
</dbReference>
<dbReference type="CDD" id="cd04050">
    <property type="entry name" value="C2B_Synaptotagmin-like"/>
    <property type="match status" value="1"/>
</dbReference>
<dbReference type="CDD" id="cd04030">
    <property type="entry name" value="C2C_KIAA1228"/>
    <property type="match status" value="1"/>
</dbReference>
<dbReference type="CDD" id="cd21680">
    <property type="entry name" value="SMP_ESyt2"/>
    <property type="match status" value="1"/>
</dbReference>
<dbReference type="FunFam" id="2.60.40.150:FF:000025">
    <property type="entry name" value="Extended synaptotagmin 2"/>
    <property type="match status" value="1"/>
</dbReference>
<dbReference type="FunFam" id="2.60.40.150:FF:000078">
    <property type="entry name" value="Extended synaptotagmin 2"/>
    <property type="match status" value="1"/>
</dbReference>
<dbReference type="FunFam" id="2.60.40.150:FF:000091">
    <property type="entry name" value="Extended synaptotagmin 2"/>
    <property type="match status" value="1"/>
</dbReference>
<dbReference type="Gene3D" id="2.60.40.150">
    <property type="entry name" value="C2 domain"/>
    <property type="match status" value="3"/>
</dbReference>
<dbReference type="InterPro" id="IPR000008">
    <property type="entry name" value="C2_dom"/>
</dbReference>
<dbReference type="InterPro" id="IPR035892">
    <property type="entry name" value="C2_domain_sf"/>
</dbReference>
<dbReference type="InterPro" id="IPR037752">
    <property type="entry name" value="C2C_KIAA1228"/>
</dbReference>
<dbReference type="InterPro" id="IPR037733">
    <property type="entry name" value="Ext_Synaptotagmin_C2A"/>
</dbReference>
<dbReference type="InterPro" id="IPR037749">
    <property type="entry name" value="Ext_Synaptotagmin_C2B"/>
</dbReference>
<dbReference type="InterPro" id="IPR051634">
    <property type="entry name" value="Extended_Synaptotagmin"/>
</dbReference>
<dbReference type="InterPro" id="IPR031468">
    <property type="entry name" value="SMP_LBD"/>
</dbReference>
<dbReference type="InterPro" id="IPR039010">
    <property type="entry name" value="Synaptotagmin_SMP"/>
</dbReference>
<dbReference type="PANTHER" id="PTHR45761:SF2">
    <property type="entry name" value="EXTENDED SYNAPTOTAGMIN-2"/>
    <property type="match status" value="1"/>
</dbReference>
<dbReference type="PANTHER" id="PTHR45761">
    <property type="entry name" value="EXTENDED SYNAPTOTAGMIN-LIKE PROTEIN 2, ISOFORM C"/>
    <property type="match status" value="1"/>
</dbReference>
<dbReference type="Pfam" id="PF00168">
    <property type="entry name" value="C2"/>
    <property type="match status" value="3"/>
</dbReference>
<dbReference type="Pfam" id="PF17047">
    <property type="entry name" value="SMP_LBD"/>
    <property type="match status" value="1"/>
</dbReference>
<dbReference type="SMART" id="SM00239">
    <property type="entry name" value="C2"/>
    <property type="match status" value="3"/>
</dbReference>
<dbReference type="SUPFAM" id="SSF49562">
    <property type="entry name" value="C2 domain (Calcium/lipid-binding domain, CaLB)"/>
    <property type="match status" value="3"/>
</dbReference>
<dbReference type="PROSITE" id="PS50004">
    <property type="entry name" value="C2"/>
    <property type="match status" value="3"/>
</dbReference>
<dbReference type="PROSITE" id="PS51847">
    <property type="entry name" value="SMP"/>
    <property type="match status" value="1"/>
</dbReference>
<keyword id="KW-0106">Calcium</keyword>
<keyword id="KW-1003">Cell membrane</keyword>
<keyword id="KW-0254">Endocytosis</keyword>
<keyword id="KW-0256">Endoplasmic reticulum</keyword>
<keyword id="KW-0445">Lipid transport</keyword>
<keyword id="KW-0446">Lipid-binding</keyword>
<keyword id="KW-0472">Membrane</keyword>
<keyword id="KW-0479">Metal-binding</keyword>
<keyword id="KW-1185">Reference proteome</keyword>
<keyword id="KW-0677">Repeat</keyword>
<keyword id="KW-0812">Transmembrane</keyword>
<keyword id="KW-1133">Transmembrane helix</keyword>
<keyword id="KW-0813">Transport</keyword>
<proteinExistence type="evidence at transcript level"/>
<evidence type="ECO:0000250" key="1"/>
<evidence type="ECO:0000250" key="2">
    <source>
        <dbReference type="UniProtKB" id="A0FGR8"/>
    </source>
</evidence>
<evidence type="ECO:0000255" key="3"/>
<evidence type="ECO:0000255" key="4">
    <source>
        <dbReference type="PROSITE-ProRule" id="PRU00041"/>
    </source>
</evidence>
<evidence type="ECO:0000255" key="5">
    <source>
        <dbReference type="PROSITE-ProRule" id="PRU01194"/>
    </source>
</evidence>
<evidence type="ECO:0000256" key="6">
    <source>
        <dbReference type="SAM" id="MobiDB-lite"/>
    </source>
</evidence>
<evidence type="ECO:0000269" key="7">
    <source>
    </source>
</evidence>
<evidence type="ECO:0000305" key="8"/>
<reference key="1">
    <citation type="submission" date="2003-02" db="EMBL/GenBank/DDBJ databases">
        <authorList>
            <consortium name="NIH - Xenopus Gene Collection (XGC) project"/>
        </authorList>
    </citation>
    <scope>NUCLEOTIDE SEQUENCE [LARGE SCALE MRNA]</scope>
    <source>
        <tissue>Embryo</tissue>
    </source>
</reference>
<reference key="2">
    <citation type="journal article" date="2010" name="Dev. Cell">
        <title>Extended-synaptotagmin-2 mediates FGF receptor endocytosis and ERK activation in vivo.</title>
        <authorList>
            <person name="Jean S."/>
            <person name="Mikryukov A."/>
            <person name="Tremblay M.G."/>
            <person name="Baril J."/>
            <person name="Guillou F."/>
            <person name="Bellenfant S."/>
            <person name="Moss T."/>
        </authorList>
    </citation>
    <scope>FUNCTION</scope>
    <scope>SUBCELLULAR LOCATION</scope>
    <scope>DEVELOPMENTAL STAGE</scope>
    <scope>DISRUPTION PHENOTYPE</scope>
    <scope>DOMAIN</scope>
</reference>
<accession>Q7ZWU7</accession>
<sequence>MASESGAEKGPPTTPAENGQPGVPIAAAVAADEQGMISVDIAGLFYQFSKTFILIFPVYVLGYFGLSFSWLLIALVLLLWWRRNKGNKNSRLYRALAFLETEEKSVKHHIASIDLPAWVHFPDIERAEWLNKTVKHMWPYICQFIEKLFRETIEPAVRGANAHLSTFSFTKIDMGSQPLRINGVKVYTENVDKRQIILDLQISFVGETEIDLEVKRYFCRAGVKSIQLHGTMRVILEPLIGDVPIVGALSIFFLRKPLLEINWTGLTNMLDMPGLNGLSDTIILDIISNYLVLPNRITVPLVSDVQIAQLRFPIPKGVLRIHFLEAQDLMWKDTYMKGLVKGKSDPYGVVRLGNQVFQSKVIKENLNPKWNEVYEALVHEHPGQELEIELFDEDTDKDDFLGSLLIDLVEVEKERVVDEWFTLDEATSGKLHLKLEWLTPKSTTENLDQVLKSIKADKDQANDGLSAALLILYLDSARSLPNNPLEINHDGMKKAAVEKAKKAGKKIGSSPNPYVLFSVGHTVQESKVKYKTAEPVWEQTFTFFVHNPKRQDLEVEVKDENHQNSMGNIKIPLSQILASEDLTLNQRFHLNNSGPNSSLKMKIALRILHVEKPVRSPDEQHTSQVKRPSIFKGKQPPTPQMPAPSPAVAHKPPPTPKLETNKKLENGNKSSTPSASPKRPTELHKSSSSLSGSSFTYSPPHLPTKEPTPSIASDISLPVATQELRERLRQLQNGTTLGQSPLGQIQLTIRHSSQRNKLMVVVHSCRNLIAFSEEGSDPYVRIYLLPDKRRSGRRKTHVHKRTLNPIYDQTFEFSVSLADLQRRTLDVAVKNGGGFLFREKGLLGKLLLEINTEDAAKGWTQWFDLTEDGTRAAASS</sequence>
<name>EST2B_XENLA</name>
<comment type="function">
    <text evidence="1 7">Tethers the endoplasmic reticulum to the cell membrane and promotes the formation of appositions between the endoplasmic reticulum and the cell membrane. Binds glycerophospholipids in a barrel-like domain and may play a role in cellular lipid transport (By similarity). Plays a role in the rapid internalization of fgfr1 that has been activated by fgf1 binding; this occurs most likely via the AP-2 complex. Required for normal fgf signaling and the activation of downstream signaling cascades via its role in the internalization of activated fgfr1. Required for normal embryonic development via its role in fgf signaling and the downstream regulation of t/xBRA expression.</text>
</comment>
<comment type="subunit">
    <text>Interacts with fgfr1 that has been activated by fgf1 binding. Interacts (via C2 domains) with the AP-2 complex (via an alpha subunit). Identified in a complex with the AP-2 complex and fgfr1.</text>
</comment>
<comment type="subcellular location">
    <subcellularLocation>
        <location evidence="7">Cell membrane</location>
        <topology evidence="7">Peripheral membrane protein</topology>
    </subcellularLocation>
    <subcellularLocation>
        <location evidence="2">Endoplasmic reticulum membrane</location>
        <topology evidence="3">Multi-pass membrane protein</topology>
    </subcellularLocation>
    <text evidence="2">Localizes to endoplasmic reticulum-plasma membrane contact sites (EPCS). Recruited to the cell membrane via the third C2 domain (By similarity).</text>
</comment>
<comment type="developmental stage">
    <text evidence="7">Detected throughout embryonic development. In late gastrula and neurula stages, mainly expressed in head and dorsolateral mesoderm, and in eye, cranial neural crest and somites at later stages.</text>
</comment>
<comment type="domain">
    <text evidence="1">Anchored to the endoplasmic reticulum membrane by a transmembrane hairpin structure; both N-terminus and C-terminus are cytoplasmic.</text>
</comment>
<comment type="domain">
    <text evidence="1 7">The C2 domains mediate lipid and calcium binding. The N-terminal C2 domain binds calcium ions and is important for calcium-dependent lipid binding and interaction with membranes. Two calcium ions are bound at a high-affinity site and a third calcium ion is bound with lower affinity. May bind up to four calcium ions. In contrast, the second C2 domain apparently does not bind calcium (By similarity). The third C2 domain mediates interaction with membranes enriched in phosphatidylinositol 4,5-bisphosphate and is required for location at the cell membrane.</text>
</comment>
<comment type="domain">
    <text evidence="2">The SMP-LTD domain is a barrel-like domain that binds glycerophospholipids in its interior; can bind two lipid molecules simultaneously. Binds a variety of lipids, including phosphatidylethanolamine, phosphatidylcholine and phosphatidylinositol (By similarity).</text>
</comment>
<comment type="disruption phenotype">
    <text evidence="7">Morpholino-mediated knock-down causes severe trunk shortening, disruption of somatic muscle formation and impairs the expression of the mesodermal marker t/xBRA, similar to the effects of inhibition of fgf signaling.</text>
</comment>
<comment type="similarity">
    <text evidence="8">Belongs to the extended synaptotagmin family.</text>
</comment>
<organism>
    <name type="scientific">Xenopus laevis</name>
    <name type="common">African clawed frog</name>
    <dbReference type="NCBI Taxonomy" id="8355"/>
    <lineage>
        <taxon>Eukaryota</taxon>
        <taxon>Metazoa</taxon>
        <taxon>Chordata</taxon>
        <taxon>Craniata</taxon>
        <taxon>Vertebrata</taxon>
        <taxon>Euteleostomi</taxon>
        <taxon>Amphibia</taxon>
        <taxon>Batrachia</taxon>
        <taxon>Anura</taxon>
        <taxon>Pipoidea</taxon>
        <taxon>Pipidae</taxon>
        <taxon>Xenopodinae</taxon>
        <taxon>Xenopus</taxon>
        <taxon>Xenopus</taxon>
    </lineage>
</organism>